<dbReference type="EMBL" id="L42023">
    <property type="protein sequence ID" value="AAC22286.1"/>
    <property type="molecule type" value="Genomic_DNA"/>
</dbReference>
<dbReference type="PIR" id="G64155">
    <property type="entry name" value="G64155"/>
</dbReference>
<dbReference type="RefSeq" id="NP_438786.1">
    <property type="nucleotide sequence ID" value="NC_000907.1"/>
</dbReference>
<dbReference type="SMR" id="P44789"/>
<dbReference type="STRING" id="71421.HI_0626"/>
<dbReference type="EnsemblBacteria" id="AAC22286">
    <property type="protein sequence ID" value="AAC22286"/>
    <property type="gene ID" value="HI_0626"/>
</dbReference>
<dbReference type="KEGG" id="hin:HI_0626"/>
<dbReference type="PATRIC" id="fig|71421.8.peg.652"/>
<dbReference type="eggNOG" id="COG1970">
    <property type="taxonomic scope" value="Bacteria"/>
</dbReference>
<dbReference type="HOGENOM" id="CLU_095787_0_0_6"/>
<dbReference type="OrthoDB" id="9810350at2"/>
<dbReference type="PhylomeDB" id="P44789"/>
<dbReference type="BioCyc" id="HINF71421:G1GJ1-653-MONOMER"/>
<dbReference type="Proteomes" id="UP000000579">
    <property type="component" value="Chromosome"/>
</dbReference>
<dbReference type="GO" id="GO:0016020">
    <property type="term" value="C:membrane"/>
    <property type="evidence" value="ECO:0000318"/>
    <property type="project" value="GO_Central"/>
</dbReference>
<dbReference type="GO" id="GO:0005886">
    <property type="term" value="C:plasma membrane"/>
    <property type="evidence" value="ECO:0007669"/>
    <property type="project" value="UniProtKB-SubCell"/>
</dbReference>
<dbReference type="GO" id="GO:0008381">
    <property type="term" value="F:mechanosensitive monoatomic ion channel activity"/>
    <property type="evidence" value="ECO:0000318"/>
    <property type="project" value="GO_Central"/>
</dbReference>
<dbReference type="GO" id="GO:0006811">
    <property type="term" value="P:monoatomic ion transport"/>
    <property type="evidence" value="ECO:0000318"/>
    <property type="project" value="GO_Central"/>
</dbReference>
<dbReference type="FunFam" id="1.10.1200.120:FF:000001">
    <property type="entry name" value="Large-conductance mechanosensitive channel"/>
    <property type="match status" value="1"/>
</dbReference>
<dbReference type="Gene3D" id="1.10.1200.120">
    <property type="entry name" value="Large-conductance mechanosensitive channel, MscL, domain 1"/>
    <property type="match status" value="1"/>
</dbReference>
<dbReference type="HAMAP" id="MF_00115">
    <property type="entry name" value="MscL"/>
    <property type="match status" value="1"/>
</dbReference>
<dbReference type="InterPro" id="IPR019823">
    <property type="entry name" value="Mechanosensitive_channel_CS"/>
</dbReference>
<dbReference type="InterPro" id="IPR001185">
    <property type="entry name" value="MS_channel"/>
</dbReference>
<dbReference type="InterPro" id="IPR037673">
    <property type="entry name" value="MSC/AndL"/>
</dbReference>
<dbReference type="InterPro" id="IPR036019">
    <property type="entry name" value="MscL_channel"/>
</dbReference>
<dbReference type="NCBIfam" id="TIGR00220">
    <property type="entry name" value="mscL"/>
    <property type="match status" value="1"/>
</dbReference>
<dbReference type="NCBIfam" id="NF001843">
    <property type="entry name" value="PRK00567.1-4"/>
    <property type="match status" value="1"/>
</dbReference>
<dbReference type="PANTHER" id="PTHR30266:SF2">
    <property type="entry name" value="LARGE-CONDUCTANCE MECHANOSENSITIVE CHANNEL"/>
    <property type="match status" value="1"/>
</dbReference>
<dbReference type="PANTHER" id="PTHR30266">
    <property type="entry name" value="MECHANOSENSITIVE CHANNEL MSCL"/>
    <property type="match status" value="1"/>
</dbReference>
<dbReference type="Pfam" id="PF01741">
    <property type="entry name" value="MscL"/>
    <property type="match status" value="1"/>
</dbReference>
<dbReference type="PRINTS" id="PR01264">
    <property type="entry name" value="MECHCHANNEL"/>
</dbReference>
<dbReference type="SUPFAM" id="SSF81330">
    <property type="entry name" value="Gated mechanosensitive channel"/>
    <property type="match status" value="1"/>
</dbReference>
<dbReference type="PROSITE" id="PS01327">
    <property type="entry name" value="MSCL"/>
    <property type="match status" value="1"/>
</dbReference>
<proteinExistence type="inferred from homology"/>
<comment type="function">
    <text evidence="4">Channel that opens in response to stretch forces in the membrane lipid bilayer. Forms a nonselective ion channel with a conductance of about 4 nanosiemens. May participate in the regulation of osmotic pressure changes within the cell.</text>
</comment>
<comment type="subunit">
    <text evidence="1 3">Homopentamer.</text>
</comment>
<comment type="subcellular location">
    <subcellularLocation>
        <location evidence="3 4">Cell inner membrane</location>
        <topology evidence="1 3">Multi-pass membrane protein</topology>
    </subcellularLocation>
</comment>
<comment type="similarity">
    <text evidence="3 5">Belongs to the MscL family.</text>
</comment>
<sequence length="128" mass="14198">MNFIKEFREFAMRGNVVDMAVGVIIGSAFGKIVSSLVSDIFTPVLGILTGGIDFKDMKFVLAQAQGDVPAVTLNYGLFIQNVIDFIIIAFAIFMMIKVINKVRKPEEKKTAPKAETLLTEIRDLLKNK</sequence>
<name>MSCL_HAEIN</name>
<accession>P44789</accession>
<evidence type="ECO:0000250" key="1">
    <source>
        <dbReference type="UniProtKB" id="P0A742"/>
    </source>
</evidence>
<evidence type="ECO:0000250" key="2">
    <source>
        <dbReference type="UniProtKB" id="P9WJN5"/>
    </source>
</evidence>
<evidence type="ECO:0000255" key="3">
    <source>
        <dbReference type="HAMAP-Rule" id="MF_00115"/>
    </source>
</evidence>
<evidence type="ECO:0000269" key="4">
    <source>
    </source>
</evidence>
<evidence type="ECO:0000305" key="5"/>
<keyword id="KW-0997">Cell inner membrane</keyword>
<keyword id="KW-1003">Cell membrane</keyword>
<keyword id="KW-0407">Ion channel</keyword>
<keyword id="KW-0406">Ion transport</keyword>
<keyword id="KW-0472">Membrane</keyword>
<keyword id="KW-1185">Reference proteome</keyword>
<keyword id="KW-0812">Transmembrane</keyword>
<keyword id="KW-1133">Transmembrane helix</keyword>
<keyword id="KW-0813">Transport</keyword>
<organism>
    <name type="scientific">Haemophilus influenzae (strain ATCC 51907 / DSM 11121 / KW20 / Rd)</name>
    <dbReference type="NCBI Taxonomy" id="71421"/>
    <lineage>
        <taxon>Bacteria</taxon>
        <taxon>Pseudomonadati</taxon>
        <taxon>Pseudomonadota</taxon>
        <taxon>Gammaproteobacteria</taxon>
        <taxon>Pasteurellales</taxon>
        <taxon>Pasteurellaceae</taxon>
        <taxon>Haemophilus</taxon>
    </lineage>
</organism>
<gene>
    <name evidence="3" type="primary">mscL</name>
    <name type="ordered locus">HI_0626</name>
</gene>
<reference key="1">
    <citation type="journal article" date="1995" name="Science">
        <title>Whole-genome random sequencing and assembly of Haemophilus influenzae Rd.</title>
        <authorList>
            <person name="Fleischmann R.D."/>
            <person name="Adams M.D."/>
            <person name="White O."/>
            <person name="Clayton R.A."/>
            <person name="Kirkness E.F."/>
            <person name="Kerlavage A.R."/>
            <person name="Bult C.J."/>
            <person name="Tomb J.-F."/>
            <person name="Dougherty B.A."/>
            <person name="Merrick J.M."/>
            <person name="McKenney K."/>
            <person name="Sutton G.G."/>
            <person name="FitzHugh W."/>
            <person name="Fields C.A."/>
            <person name="Gocayne J.D."/>
            <person name="Scott J.D."/>
            <person name="Shirley R."/>
            <person name="Liu L.-I."/>
            <person name="Glodek A."/>
            <person name="Kelley J.M."/>
            <person name="Weidman J.F."/>
            <person name="Phillips C.A."/>
            <person name="Spriggs T."/>
            <person name="Hedblom E."/>
            <person name="Cotton M.D."/>
            <person name="Utterback T.R."/>
            <person name="Hanna M.C."/>
            <person name="Nguyen D.T."/>
            <person name="Saudek D.M."/>
            <person name="Brandon R.C."/>
            <person name="Fine L.D."/>
            <person name="Fritchman J.L."/>
            <person name="Fuhrmann J.L."/>
            <person name="Geoghagen N.S.M."/>
            <person name="Gnehm C.L."/>
            <person name="McDonald L.A."/>
            <person name="Small K.V."/>
            <person name="Fraser C.M."/>
            <person name="Smith H.O."/>
            <person name="Venter J.C."/>
        </authorList>
    </citation>
    <scope>NUCLEOTIDE SEQUENCE [LARGE SCALE GENOMIC DNA]</scope>
    <source>
        <strain>ATCC 51907 / DSM 11121 / KW20 / Rd</strain>
    </source>
</reference>
<reference key="2">
    <citation type="journal article" date="1998" name="Mol. Microbiol.">
        <title>Functional and structural conservation in the mechanosensitive channel mscL implicates elements crucial for mechanosensation.</title>
        <authorList>
            <person name="Moe P.C."/>
            <person name="Blount P."/>
            <person name="Kung C."/>
        </authorList>
    </citation>
    <scope>FUNCTION</scope>
    <scope>SUBCELLULAR LOCATION</scope>
</reference>
<feature type="chain" id="PRO_0000192444" description="Large-conductance mechanosensitive channel">
    <location>
        <begin position="1"/>
        <end position="128"/>
    </location>
</feature>
<feature type="topological domain" description="Cytoplasmic" evidence="2">
    <location>
        <begin position="1"/>
        <end position="16"/>
    </location>
</feature>
<feature type="transmembrane region" description="Helical" evidence="2">
    <location>
        <begin position="17"/>
        <end position="45"/>
    </location>
</feature>
<feature type="topological domain" description="Periplasmic" evidence="2">
    <location>
        <begin position="46"/>
        <end position="74"/>
    </location>
</feature>
<feature type="transmembrane region" description="Helical" evidence="2">
    <location>
        <begin position="75"/>
        <end position="94"/>
    </location>
</feature>
<feature type="topological domain" description="Cytoplasmic" evidence="2">
    <location>
        <begin position="95"/>
        <end position="128"/>
    </location>
</feature>
<protein>
    <recommendedName>
        <fullName evidence="3">Large-conductance mechanosensitive channel</fullName>
    </recommendedName>
</protein>